<name>PPK2_PRAMA</name>
<organism>
    <name type="scientific">Praedatophasma maraisi</name>
    <name type="common">Gladiator</name>
    <name type="synonym">Heel-walker</name>
    <dbReference type="NCBI Taxonomy" id="409170"/>
    <lineage>
        <taxon>Eukaryota</taxon>
        <taxon>Metazoa</taxon>
        <taxon>Ecdysozoa</taxon>
        <taxon>Arthropoda</taxon>
        <taxon>Hexapoda</taxon>
        <taxon>Insecta</taxon>
        <taxon>Pterygota</taxon>
        <taxon>Neoptera</taxon>
        <taxon>Polyneoptera</taxon>
        <taxon>Mantophasmatodea</taxon>
        <taxon>Mantophasmatidae</taxon>
        <taxon>Praedatophasma</taxon>
    </lineage>
</organism>
<proteinExistence type="evidence at protein level"/>
<dbReference type="GO" id="GO:0005576">
    <property type="term" value="C:extracellular region"/>
    <property type="evidence" value="ECO:0007669"/>
    <property type="project" value="UniProtKB-SubCell"/>
</dbReference>
<dbReference type="GO" id="GO:0007218">
    <property type="term" value="P:neuropeptide signaling pathway"/>
    <property type="evidence" value="ECO:0007669"/>
    <property type="project" value="UniProtKB-KW"/>
</dbReference>
<evidence type="ECO:0000250" key="1">
    <source>
        <dbReference type="UniProtKB" id="P82619"/>
    </source>
</evidence>
<evidence type="ECO:0000255" key="2"/>
<evidence type="ECO:0000269" key="3">
    <source>
    </source>
</evidence>
<evidence type="ECO:0000303" key="4">
    <source>
    </source>
</evidence>
<evidence type="ECO:0000305" key="5"/>
<evidence type="ECO:0000305" key="6">
    <source>
    </source>
</evidence>
<keyword id="KW-0027">Amidation</keyword>
<keyword id="KW-0903">Direct protein sequencing</keyword>
<keyword id="KW-0527">Neuropeptide</keyword>
<keyword id="KW-0964">Secreted</keyword>
<protein>
    <recommendedName>
        <fullName evidence="4">Pyrokinin-2</fullName>
        <shortName evidence="4">PK-2</shortName>
    </recommendedName>
    <alternativeName>
        <fullName evidence="1">FXPRL-amide</fullName>
    </alternativeName>
</protein>
<feature type="peptide" id="PRO_0000421590" description="Pyrokinin-2" evidence="3">
    <location>
        <begin position="1"/>
        <end position="8"/>
    </location>
</feature>
<feature type="modified residue" description="Leucine amide" evidence="3">
    <location>
        <position position="8"/>
    </location>
</feature>
<accession>B3A0G7</accession>
<comment type="function">
    <text evidence="1">Myoactive.</text>
</comment>
<comment type="subcellular location">
    <subcellularLocation>
        <location evidence="6">Secreted</location>
    </subcellularLocation>
</comment>
<comment type="similarity">
    <text evidence="2">Belongs to the pyrokinin family.</text>
</comment>
<reference evidence="5" key="1">
    <citation type="journal article" date="2012" name="Syst. Biol.">
        <title>Peptidomics-based phylogeny and biogeography of Mantophasmatodea (Hexapoda).</title>
        <authorList>
            <person name="Predel R."/>
            <person name="Neupert S."/>
            <person name="Huetteroth W."/>
            <person name="Kahnt J."/>
            <person name="Waidelich D."/>
            <person name="Roth S."/>
        </authorList>
    </citation>
    <scope>PROTEIN SEQUENCE</scope>
    <scope>AMIDATION AT LEU-8</scope>
    <source>
        <tissue evidence="3">Corpora cardiaca</tissue>
    </source>
</reference>
<sequence>SPPFAPRL</sequence>